<name>SYP_CHLPM</name>
<organism>
    <name type="scientific">Chlorobium phaeovibrioides (strain DSM 265 / 1930)</name>
    <name type="common">Prosthecochloris vibrioformis (strain DSM 265)</name>
    <dbReference type="NCBI Taxonomy" id="290318"/>
    <lineage>
        <taxon>Bacteria</taxon>
        <taxon>Pseudomonadati</taxon>
        <taxon>Chlorobiota</taxon>
        <taxon>Chlorobiia</taxon>
        <taxon>Chlorobiales</taxon>
        <taxon>Chlorobiaceae</taxon>
        <taxon>Chlorobium/Pelodictyon group</taxon>
        <taxon>Chlorobium</taxon>
    </lineage>
</organism>
<reference key="1">
    <citation type="submission" date="2007-03" db="EMBL/GenBank/DDBJ databases">
        <title>Complete sequence of Prosthecochloris vibrioformis DSM 265.</title>
        <authorList>
            <consortium name="US DOE Joint Genome Institute"/>
            <person name="Copeland A."/>
            <person name="Lucas S."/>
            <person name="Lapidus A."/>
            <person name="Barry K."/>
            <person name="Detter J.C."/>
            <person name="Glavina del Rio T."/>
            <person name="Hammon N."/>
            <person name="Israni S."/>
            <person name="Pitluck S."/>
            <person name="Schmutz J."/>
            <person name="Larimer F."/>
            <person name="Land M."/>
            <person name="Hauser L."/>
            <person name="Mikhailova N."/>
            <person name="Li T."/>
            <person name="Overmann J."/>
            <person name="Schuster S.C."/>
            <person name="Bryant D.A."/>
            <person name="Richardson P."/>
        </authorList>
    </citation>
    <scope>NUCLEOTIDE SEQUENCE [LARGE SCALE GENOMIC DNA]</scope>
    <source>
        <strain>DSM 265 / 1930</strain>
    </source>
</reference>
<keyword id="KW-0030">Aminoacyl-tRNA synthetase</keyword>
<keyword id="KW-0067">ATP-binding</keyword>
<keyword id="KW-0963">Cytoplasm</keyword>
<keyword id="KW-0436">Ligase</keyword>
<keyword id="KW-0547">Nucleotide-binding</keyword>
<keyword id="KW-0648">Protein biosynthesis</keyword>
<proteinExistence type="inferred from homology"/>
<evidence type="ECO:0000255" key="1">
    <source>
        <dbReference type="HAMAP-Rule" id="MF_01571"/>
    </source>
</evidence>
<comment type="function">
    <text evidence="1">Catalyzes the attachment of proline to tRNA(Pro) in a two-step reaction: proline is first activated by ATP to form Pro-AMP and then transferred to the acceptor end of tRNA(Pro).</text>
</comment>
<comment type="catalytic activity">
    <reaction evidence="1">
        <text>tRNA(Pro) + L-proline + ATP = L-prolyl-tRNA(Pro) + AMP + diphosphate</text>
        <dbReference type="Rhea" id="RHEA:14305"/>
        <dbReference type="Rhea" id="RHEA-COMP:9700"/>
        <dbReference type="Rhea" id="RHEA-COMP:9702"/>
        <dbReference type="ChEBI" id="CHEBI:30616"/>
        <dbReference type="ChEBI" id="CHEBI:33019"/>
        <dbReference type="ChEBI" id="CHEBI:60039"/>
        <dbReference type="ChEBI" id="CHEBI:78442"/>
        <dbReference type="ChEBI" id="CHEBI:78532"/>
        <dbReference type="ChEBI" id="CHEBI:456215"/>
        <dbReference type="EC" id="6.1.1.15"/>
    </reaction>
</comment>
<comment type="subunit">
    <text evidence="1">Homodimer.</text>
</comment>
<comment type="subcellular location">
    <subcellularLocation>
        <location evidence="1">Cytoplasm</location>
    </subcellularLocation>
</comment>
<comment type="domain">
    <text evidence="1">Consists of three domains: the N-terminal catalytic domain, the anticodon-binding domain and the C-terminal extension.</text>
</comment>
<comment type="similarity">
    <text evidence="1">Belongs to the class-II aminoacyl-tRNA synthetase family. ProS type 3 subfamily.</text>
</comment>
<feature type="chain" id="PRO_1000215573" description="Proline--tRNA ligase">
    <location>
        <begin position="1"/>
        <end position="481"/>
    </location>
</feature>
<protein>
    <recommendedName>
        <fullName evidence="1">Proline--tRNA ligase</fullName>
        <ecNumber evidence="1">6.1.1.15</ecNumber>
    </recommendedName>
    <alternativeName>
        <fullName evidence="1">Prolyl-tRNA synthetase</fullName>
        <shortName evidence="1">ProRS</shortName>
    </alternativeName>
</protein>
<accession>A4SFS0</accession>
<dbReference type="EC" id="6.1.1.15" evidence="1"/>
<dbReference type="EMBL" id="CP000607">
    <property type="protein sequence ID" value="ABP37329.1"/>
    <property type="molecule type" value="Genomic_DNA"/>
</dbReference>
<dbReference type="SMR" id="A4SFS0"/>
<dbReference type="STRING" id="290318.Cvib_1317"/>
<dbReference type="KEGG" id="pvi:Cvib_1317"/>
<dbReference type="eggNOG" id="COG0442">
    <property type="taxonomic scope" value="Bacteria"/>
</dbReference>
<dbReference type="HOGENOM" id="CLU_001882_4_2_10"/>
<dbReference type="OrthoDB" id="9809052at2"/>
<dbReference type="GO" id="GO:0017101">
    <property type="term" value="C:aminoacyl-tRNA synthetase multienzyme complex"/>
    <property type="evidence" value="ECO:0007669"/>
    <property type="project" value="TreeGrafter"/>
</dbReference>
<dbReference type="GO" id="GO:0005737">
    <property type="term" value="C:cytoplasm"/>
    <property type="evidence" value="ECO:0007669"/>
    <property type="project" value="UniProtKB-SubCell"/>
</dbReference>
<dbReference type="GO" id="GO:0005524">
    <property type="term" value="F:ATP binding"/>
    <property type="evidence" value="ECO:0007669"/>
    <property type="project" value="UniProtKB-UniRule"/>
</dbReference>
<dbReference type="GO" id="GO:0004827">
    <property type="term" value="F:proline-tRNA ligase activity"/>
    <property type="evidence" value="ECO:0007669"/>
    <property type="project" value="UniProtKB-UniRule"/>
</dbReference>
<dbReference type="GO" id="GO:0006433">
    <property type="term" value="P:prolyl-tRNA aminoacylation"/>
    <property type="evidence" value="ECO:0007669"/>
    <property type="project" value="UniProtKB-UniRule"/>
</dbReference>
<dbReference type="CDD" id="cd00778">
    <property type="entry name" value="ProRS_core_arch_euk"/>
    <property type="match status" value="1"/>
</dbReference>
<dbReference type="FunFam" id="3.30.930.10:FF:000023">
    <property type="entry name" value="Proline--tRNA ligase"/>
    <property type="match status" value="1"/>
</dbReference>
<dbReference type="Gene3D" id="3.40.50.800">
    <property type="entry name" value="Anticodon-binding domain"/>
    <property type="match status" value="1"/>
</dbReference>
<dbReference type="Gene3D" id="3.30.930.10">
    <property type="entry name" value="Bira Bifunctional Protein, Domain 2"/>
    <property type="match status" value="1"/>
</dbReference>
<dbReference type="Gene3D" id="3.30.110.30">
    <property type="entry name" value="C-terminal domain of ProRS"/>
    <property type="match status" value="1"/>
</dbReference>
<dbReference type="HAMAP" id="MF_01571">
    <property type="entry name" value="Pro_tRNA_synth_type3"/>
    <property type="match status" value="1"/>
</dbReference>
<dbReference type="InterPro" id="IPR002314">
    <property type="entry name" value="aa-tRNA-synt_IIb"/>
</dbReference>
<dbReference type="InterPro" id="IPR006195">
    <property type="entry name" value="aa-tRNA-synth_II"/>
</dbReference>
<dbReference type="InterPro" id="IPR045864">
    <property type="entry name" value="aa-tRNA-synth_II/BPL/LPL"/>
</dbReference>
<dbReference type="InterPro" id="IPR004154">
    <property type="entry name" value="Anticodon-bd"/>
</dbReference>
<dbReference type="InterPro" id="IPR036621">
    <property type="entry name" value="Anticodon-bd_dom_sf"/>
</dbReference>
<dbReference type="InterPro" id="IPR002316">
    <property type="entry name" value="Pro-tRNA-ligase_IIa"/>
</dbReference>
<dbReference type="InterPro" id="IPR004499">
    <property type="entry name" value="Pro-tRNA-ligase_IIa_arc-type"/>
</dbReference>
<dbReference type="InterPro" id="IPR016061">
    <property type="entry name" value="Pro-tRNA_ligase_II_C"/>
</dbReference>
<dbReference type="InterPro" id="IPR017449">
    <property type="entry name" value="Pro-tRNA_synth_II"/>
</dbReference>
<dbReference type="InterPro" id="IPR033721">
    <property type="entry name" value="ProRS_core_arch_euk"/>
</dbReference>
<dbReference type="NCBIfam" id="TIGR00408">
    <property type="entry name" value="proS_fam_I"/>
    <property type="match status" value="1"/>
</dbReference>
<dbReference type="PANTHER" id="PTHR43382:SF2">
    <property type="entry name" value="BIFUNCTIONAL GLUTAMATE_PROLINE--TRNA LIGASE"/>
    <property type="match status" value="1"/>
</dbReference>
<dbReference type="PANTHER" id="PTHR43382">
    <property type="entry name" value="PROLYL-TRNA SYNTHETASE"/>
    <property type="match status" value="1"/>
</dbReference>
<dbReference type="Pfam" id="PF03129">
    <property type="entry name" value="HGTP_anticodon"/>
    <property type="match status" value="1"/>
</dbReference>
<dbReference type="Pfam" id="PF09180">
    <property type="entry name" value="ProRS-C_1"/>
    <property type="match status" value="1"/>
</dbReference>
<dbReference type="Pfam" id="PF00587">
    <property type="entry name" value="tRNA-synt_2b"/>
    <property type="match status" value="1"/>
</dbReference>
<dbReference type="PRINTS" id="PR01046">
    <property type="entry name" value="TRNASYNTHPRO"/>
</dbReference>
<dbReference type="SMART" id="SM00946">
    <property type="entry name" value="ProRS-C_1"/>
    <property type="match status" value="1"/>
</dbReference>
<dbReference type="SUPFAM" id="SSF64586">
    <property type="entry name" value="C-terminal domain of ProRS"/>
    <property type="match status" value="1"/>
</dbReference>
<dbReference type="SUPFAM" id="SSF52954">
    <property type="entry name" value="Class II aaRS ABD-related"/>
    <property type="match status" value="1"/>
</dbReference>
<dbReference type="SUPFAM" id="SSF55681">
    <property type="entry name" value="Class II aaRS and biotin synthetases"/>
    <property type="match status" value="1"/>
</dbReference>
<dbReference type="PROSITE" id="PS50862">
    <property type="entry name" value="AA_TRNA_LIGASE_II"/>
    <property type="match status" value="1"/>
</dbReference>
<sequence>MADKITSREADYSQWYIDLVRSAKLADYSDVRGCMVIRPNGYAVWEKMQAALDRMFKETGHVNAYFPLFIPESFIAKEAEHIEGFAPECAVVTHGGGEELAEKLYVRPTSETIIWSSYKKWIQSYRDLPLLINQWANVVRWEMRTRLFLRTTEFLWQEGHTAHATPEESQEEVMRMIRVYKTFAEEYMAMPVIMGRKTDSEKFAGADETYCIEAMMQDGKALQAGTSHNLGQNFAKAFDCQFQTKEGVLDYVWATSWGVSTRLIGALIMAHSDDRGLVLPPKLATRQVVIIPILRGDKAAVLAKAESMAAELKENGIPAFVDDSEQNSPGWKFAEYELQGIPVRIEVGPRDIDKGVCIAARRDTLEKTELQLDATLAVQVSGMLSAMQADMFQKALRFREENTREVTDYETFKSAVEEGFVIAHWDGTAETEEKIKEETRATIRVLPEESDYREHYHMDEPGVCIFSGKPSSQKVVFAKAY</sequence>
<gene>
    <name evidence="1" type="primary">proS</name>
    <name type="ordered locus">Cvib_1317</name>
</gene>